<proteinExistence type="inferred from homology"/>
<protein>
    <recommendedName>
        <fullName evidence="1">Ribosome-recycling factor</fullName>
        <shortName evidence="1">RRF</shortName>
    </recommendedName>
    <alternativeName>
        <fullName evidence="1">Ribosome-releasing factor</fullName>
    </alternativeName>
</protein>
<accession>B7H1U3</accession>
<name>RRF_ACIB3</name>
<comment type="function">
    <text evidence="1">Responsible for the release of ribosomes from messenger RNA at the termination of protein biosynthesis. May increase the efficiency of translation by recycling ribosomes from one round of translation to another.</text>
</comment>
<comment type="subcellular location">
    <subcellularLocation>
        <location evidence="1">Cytoplasm</location>
    </subcellularLocation>
</comment>
<comment type="similarity">
    <text evidence="1">Belongs to the RRF family.</text>
</comment>
<organism>
    <name type="scientific">Acinetobacter baumannii (strain AB307-0294)</name>
    <dbReference type="NCBI Taxonomy" id="557600"/>
    <lineage>
        <taxon>Bacteria</taxon>
        <taxon>Pseudomonadati</taxon>
        <taxon>Pseudomonadota</taxon>
        <taxon>Gammaproteobacteria</taxon>
        <taxon>Moraxellales</taxon>
        <taxon>Moraxellaceae</taxon>
        <taxon>Acinetobacter</taxon>
        <taxon>Acinetobacter calcoaceticus/baumannii complex</taxon>
    </lineage>
</organism>
<dbReference type="EMBL" id="CP001172">
    <property type="protein sequence ID" value="ACJ58243.1"/>
    <property type="molecule type" value="Genomic_DNA"/>
</dbReference>
<dbReference type="RefSeq" id="WP_000606428.1">
    <property type="nucleotide sequence ID" value="NZ_CP001172.1"/>
</dbReference>
<dbReference type="SMR" id="B7H1U3"/>
<dbReference type="GeneID" id="92894236"/>
<dbReference type="HOGENOM" id="CLU_073981_2_1_6"/>
<dbReference type="Proteomes" id="UP000006924">
    <property type="component" value="Chromosome"/>
</dbReference>
<dbReference type="GO" id="GO:0005829">
    <property type="term" value="C:cytosol"/>
    <property type="evidence" value="ECO:0007669"/>
    <property type="project" value="GOC"/>
</dbReference>
<dbReference type="GO" id="GO:0043023">
    <property type="term" value="F:ribosomal large subunit binding"/>
    <property type="evidence" value="ECO:0007669"/>
    <property type="project" value="TreeGrafter"/>
</dbReference>
<dbReference type="GO" id="GO:0002184">
    <property type="term" value="P:cytoplasmic translational termination"/>
    <property type="evidence" value="ECO:0007669"/>
    <property type="project" value="TreeGrafter"/>
</dbReference>
<dbReference type="CDD" id="cd00520">
    <property type="entry name" value="RRF"/>
    <property type="match status" value="1"/>
</dbReference>
<dbReference type="FunFam" id="1.10.132.20:FF:000001">
    <property type="entry name" value="Ribosome-recycling factor"/>
    <property type="match status" value="1"/>
</dbReference>
<dbReference type="FunFam" id="3.30.1360.40:FF:000001">
    <property type="entry name" value="Ribosome-recycling factor"/>
    <property type="match status" value="1"/>
</dbReference>
<dbReference type="Gene3D" id="3.30.1360.40">
    <property type="match status" value="1"/>
</dbReference>
<dbReference type="Gene3D" id="1.10.132.20">
    <property type="entry name" value="Ribosome-recycling factor"/>
    <property type="match status" value="1"/>
</dbReference>
<dbReference type="HAMAP" id="MF_00040">
    <property type="entry name" value="RRF"/>
    <property type="match status" value="1"/>
</dbReference>
<dbReference type="InterPro" id="IPR002661">
    <property type="entry name" value="Ribosome_recyc_fac"/>
</dbReference>
<dbReference type="InterPro" id="IPR023584">
    <property type="entry name" value="Ribosome_recyc_fac_dom"/>
</dbReference>
<dbReference type="InterPro" id="IPR036191">
    <property type="entry name" value="RRF_sf"/>
</dbReference>
<dbReference type="NCBIfam" id="TIGR00496">
    <property type="entry name" value="frr"/>
    <property type="match status" value="1"/>
</dbReference>
<dbReference type="PANTHER" id="PTHR20982:SF3">
    <property type="entry name" value="MITOCHONDRIAL RIBOSOME RECYCLING FACTOR PSEUDO 1"/>
    <property type="match status" value="1"/>
</dbReference>
<dbReference type="PANTHER" id="PTHR20982">
    <property type="entry name" value="RIBOSOME RECYCLING FACTOR"/>
    <property type="match status" value="1"/>
</dbReference>
<dbReference type="Pfam" id="PF01765">
    <property type="entry name" value="RRF"/>
    <property type="match status" value="1"/>
</dbReference>
<dbReference type="SUPFAM" id="SSF55194">
    <property type="entry name" value="Ribosome recycling factor, RRF"/>
    <property type="match status" value="1"/>
</dbReference>
<feature type="chain" id="PRO_1000194886" description="Ribosome-recycling factor">
    <location>
        <begin position="1"/>
        <end position="184"/>
    </location>
</feature>
<reference key="1">
    <citation type="journal article" date="2008" name="J. Bacteriol.">
        <title>Comparative genome sequence analysis of multidrug-resistant Acinetobacter baumannii.</title>
        <authorList>
            <person name="Adams M.D."/>
            <person name="Goglin K."/>
            <person name="Molyneaux N."/>
            <person name="Hujer K.M."/>
            <person name="Lavender H."/>
            <person name="Jamison J.J."/>
            <person name="MacDonald I.J."/>
            <person name="Martin K.M."/>
            <person name="Russo T."/>
            <person name="Campagnari A.A."/>
            <person name="Hujer A.M."/>
            <person name="Bonomo R.A."/>
            <person name="Gill S.R."/>
        </authorList>
    </citation>
    <scope>NUCLEOTIDE SEQUENCE [LARGE SCALE GENOMIC DNA]</scope>
    <source>
        <strain>AB307-0294</strain>
    </source>
</reference>
<sequence>MINDLKKDSEQRMLKTLESLEQGFAKVRTGRAHPSILNGVMVPYYGSDVPLNQVANVGVEDSRTLIVQPFERTMVAAIDKAIRESDLGLNPITADSIRVPLPALTEETRRDMQKIARSEAENAKVAIRNIRRDVLGDIKALLKEKEISEDDERRAGDDIQKITDKYVAEVDKRLAAKEAELMKV</sequence>
<evidence type="ECO:0000255" key="1">
    <source>
        <dbReference type="HAMAP-Rule" id="MF_00040"/>
    </source>
</evidence>
<gene>
    <name evidence="1" type="primary">frr</name>
    <name type="ordered locus">ABBFA_001473</name>
</gene>
<keyword id="KW-0963">Cytoplasm</keyword>
<keyword id="KW-0648">Protein biosynthesis</keyword>